<keyword id="KW-0066">ATP synthesis</keyword>
<keyword id="KW-0139">CF(1)</keyword>
<keyword id="KW-0903">Direct protein sequencing</keyword>
<keyword id="KW-0375">Hydrogen ion transport</keyword>
<keyword id="KW-0406">Ion transport</keyword>
<keyword id="KW-0472">Membrane</keyword>
<keyword id="KW-0813">Transport</keyword>
<name>ATPD_RHOCA</name>
<evidence type="ECO:0000255" key="1">
    <source>
        <dbReference type="HAMAP-Rule" id="MF_01416"/>
    </source>
</evidence>
<evidence type="ECO:0000269" key="2">
    <source ref="2"/>
</evidence>
<evidence type="ECO:0000305" key="3"/>
<feature type="initiator methionine" description="Removed" evidence="2">
    <location>
        <position position="1"/>
    </location>
</feature>
<feature type="chain" id="PRO_0000193476" description="ATP synthase subunit delta">
    <location>
        <begin position="2"/>
        <end position="186"/>
    </location>
</feature>
<feature type="sequence conflict" description="In Ref. 2; AA sequence." evidence="3" ref="2">
    <original>S</original>
    <variation>A</variation>
    <location>
        <position position="2"/>
    </location>
</feature>
<accession>P72244</accession>
<comment type="function">
    <text evidence="1">F(1)F(0) ATP synthase produces ATP from ADP in the presence of a proton or sodium gradient. F-type ATPases consist of two structural domains, F(1) containing the extramembraneous catalytic core and F(0) containing the membrane proton channel, linked together by a central stalk and a peripheral stalk. During catalysis, ATP synthesis in the catalytic domain of F(1) is coupled via a rotary mechanism of the central stalk subunits to proton translocation.</text>
</comment>
<comment type="function">
    <text evidence="1">This protein is part of the stalk that links CF(0) to CF(1). It either transmits conformational changes from CF(0) to CF(1) or is implicated in proton conduction.</text>
</comment>
<comment type="subunit">
    <text evidence="1">F-type ATPases have 2 components, F(1) - the catalytic core - and F(0) - the membrane proton channel. F(1) has five subunits: alpha(3), beta(3), gamma(1), delta(1), epsilon(1). F(0) has three main subunits: a(1), b(2) and c(10-14). The alpha and beta chains form an alternating ring which encloses part of the gamma chain. F(1) is attached to F(0) by a central stalk formed by the gamma and epsilon chains, while a peripheral stalk is formed by the delta and b chains.</text>
</comment>
<comment type="subcellular location">
    <subcellularLocation>
        <location evidence="2">Cellular chromatophore membrane</location>
        <topology evidence="1 2">Peripheral membrane protein</topology>
    </subcellularLocation>
</comment>
<comment type="similarity">
    <text evidence="1">Belongs to the ATPase delta chain family.</text>
</comment>
<protein>
    <recommendedName>
        <fullName evidence="1">ATP synthase subunit delta</fullName>
    </recommendedName>
    <alternativeName>
        <fullName evidence="1">ATP synthase F(1) sector subunit delta</fullName>
    </alternativeName>
    <alternativeName>
        <fullName evidence="1">F-type ATPase subunit delta</fullName>
        <shortName evidence="1">F-ATPase subunit delta</shortName>
    </alternativeName>
</protein>
<sequence>MSEPASISAAIAGRYATAIFDLAQEAKGIDALSADVDALTAALAGSAELRDLISSPVYTREEQGDAIAAVAAKMGLSAPLANGLKLMATKRRLFALPQLLKGLAAAIAEAKGEMTADVTSATALSAAQAEKLAATLAKQTGKTVKLNVAVDESLIGGMIVKLGSRMIDTTVKAKLASLQNAMKEVG</sequence>
<organism>
    <name type="scientific">Rhodobacter capsulatus</name>
    <name type="common">Rhodopseudomonas capsulata</name>
    <dbReference type="NCBI Taxonomy" id="1061"/>
    <lineage>
        <taxon>Bacteria</taxon>
        <taxon>Pseudomonadati</taxon>
        <taxon>Pseudomonadota</taxon>
        <taxon>Alphaproteobacteria</taxon>
        <taxon>Rhodobacterales</taxon>
        <taxon>Rhodobacter group</taxon>
        <taxon>Rhodobacter</taxon>
    </lineage>
</organism>
<dbReference type="EMBL" id="X99599">
    <property type="protein sequence ID" value="CAA67907.1"/>
    <property type="molecule type" value="Genomic_DNA"/>
</dbReference>
<dbReference type="SMR" id="P72244"/>
<dbReference type="OMA" id="MVDNIQD"/>
<dbReference type="GO" id="GO:0005886">
    <property type="term" value="C:plasma membrane"/>
    <property type="evidence" value="ECO:0007669"/>
    <property type="project" value="UniProtKB-UniRule"/>
</dbReference>
<dbReference type="GO" id="GO:0042717">
    <property type="term" value="C:plasma membrane-derived chromatophore membrane"/>
    <property type="evidence" value="ECO:0007669"/>
    <property type="project" value="UniProtKB-SubCell"/>
</dbReference>
<dbReference type="GO" id="GO:0045259">
    <property type="term" value="C:proton-transporting ATP synthase complex"/>
    <property type="evidence" value="ECO:0007669"/>
    <property type="project" value="UniProtKB-KW"/>
</dbReference>
<dbReference type="GO" id="GO:0046933">
    <property type="term" value="F:proton-transporting ATP synthase activity, rotational mechanism"/>
    <property type="evidence" value="ECO:0007669"/>
    <property type="project" value="UniProtKB-UniRule"/>
</dbReference>
<dbReference type="Gene3D" id="1.10.520.20">
    <property type="entry name" value="N-terminal domain of the delta subunit of the F1F0-ATP synthase"/>
    <property type="match status" value="1"/>
</dbReference>
<dbReference type="HAMAP" id="MF_01416">
    <property type="entry name" value="ATP_synth_delta_bact"/>
    <property type="match status" value="1"/>
</dbReference>
<dbReference type="InterPro" id="IPR026015">
    <property type="entry name" value="ATP_synth_OSCP/delta_N_sf"/>
</dbReference>
<dbReference type="InterPro" id="IPR020781">
    <property type="entry name" value="ATPase_OSCP/d_CS"/>
</dbReference>
<dbReference type="InterPro" id="IPR000711">
    <property type="entry name" value="ATPase_OSCP/dsu"/>
</dbReference>
<dbReference type="NCBIfam" id="TIGR01145">
    <property type="entry name" value="ATP_synt_delta"/>
    <property type="match status" value="1"/>
</dbReference>
<dbReference type="NCBIfam" id="NF004406">
    <property type="entry name" value="PRK05758.3-2"/>
    <property type="match status" value="1"/>
</dbReference>
<dbReference type="PANTHER" id="PTHR11910">
    <property type="entry name" value="ATP SYNTHASE DELTA CHAIN"/>
    <property type="match status" value="1"/>
</dbReference>
<dbReference type="Pfam" id="PF00213">
    <property type="entry name" value="OSCP"/>
    <property type="match status" value="1"/>
</dbReference>
<dbReference type="PRINTS" id="PR00125">
    <property type="entry name" value="ATPASEDELTA"/>
</dbReference>
<dbReference type="SUPFAM" id="SSF47928">
    <property type="entry name" value="N-terminal domain of the delta subunit of the F1F0-ATP synthase"/>
    <property type="match status" value="1"/>
</dbReference>
<dbReference type="PROSITE" id="PS00389">
    <property type="entry name" value="ATPASE_DELTA"/>
    <property type="match status" value="1"/>
</dbReference>
<reference key="1">
    <citation type="journal article" date="1998" name="J. Bacteriol.">
        <title>The ATP synthase atpHAGDC (F1) operon from Rhodobacter capsulatus.</title>
        <authorList>
            <person name="Borghese R."/>
            <person name="Crimi M."/>
            <person name="Fava L."/>
            <person name="Melandri B.A."/>
        </authorList>
    </citation>
    <scope>NUCLEOTIDE SEQUENCE [GENOMIC DNA]</scope>
    <source>
        <strain>ATCC 33303 / B10</strain>
    </source>
</reference>
<reference key="2">
    <citation type="journal article" date="1988" name="Biochim. Biophys. Acta">
        <title>Purification of the H+-ATPase from Rhodobacter capsulatus, identification of the F1F0 components and reconstitution of the active enzyme.</title>
        <authorList>
            <person name="Gabellini N."/>
            <person name="Gao Z."/>
            <person name="Eckerskorn C."/>
            <person name="Lottspeich F."/>
            <person name="Oesterhelt D."/>
        </authorList>
    </citation>
    <scope>PROTEIN SEQUENCE OF 2-25</scope>
    <scope>SUBUNIT</scope>
    <scope>SUBCELLULAR LOCATION</scope>
    <source>
        <strain>GA</strain>
    </source>
</reference>
<gene>
    <name evidence="1" type="primary">atpH</name>
</gene>
<proteinExistence type="evidence at protein level"/>